<reference key="1">
    <citation type="journal article" date="2005" name="DNA Res.">
        <title>Complete genome sequence of the facultative anaerobic magnetotactic bacterium Magnetospirillum sp. strain AMB-1.</title>
        <authorList>
            <person name="Matsunaga T."/>
            <person name="Okamura Y."/>
            <person name="Fukuda Y."/>
            <person name="Wahyudi A.T."/>
            <person name="Murase Y."/>
            <person name="Takeyama H."/>
        </authorList>
    </citation>
    <scope>NUCLEOTIDE SEQUENCE [LARGE SCALE GENOMIC DNA]</scope>
    <source>
        <strain>ATCC 700264 / AMB-1</strain>
    </source>
</reference>
<proteinExistence type="inferred from homology"/>
<organism>
    <name type="scientific">Paramagnetospirillum magneticum (strain ATCC 700264 / AMB-1)</name>
    <name type="common">Magnetospirillum magneticum</name>
    <dbReference type="NCBI Taxonomy" id="342108"/>
    <lineage>
        <taxon>Bacteria</taxon>
        <taxon>Pseudomonadati</taxon>
        <taxon>Pseudomonadota</taxon>
        <taxon>Alphaproteobacteria</taxon>
        <taxon>Rhodospirillales</taxon>
        <taxon>Magnetospirillaceae</taxon>
        <taxon>Paramagnetospirillum</taxon>
    </lineage>
</organism>
<gene>
    <name evidence="1" type="primary">glmU</name>
    <name type="ordered locus">amb1280</name>
</gene>
<sequence length="449" mass="47142">MASSKLAVIVLAAGMGTRMKSSLPKVMHPLAGRPMVSHLLDTVSGLSPDRMVVVVGPDMELVGKTVAPFPTVIQADRLGTGHAVLQAKAALGQFDGDVLVLYGDTPLITRATLERMLAERRGPRDPAVVVLGFKPQDPGHYGRLVVGAEGLKAIVEYRDATPDQRENPLCNSGVMAIDGNRLWSLIERVDNKNSKGEYYLTDIVALARADGATCTHVEGDEAELLGVNARSELAVAEALVQARLREAAMDNGATLIDPATVWFSWDTKIGRDVTIWPHVVFGPGVTVGDNVEIKGFCHFEGCMVEAGVAAGPFTRLRPGAEIGEGAHIGNFVEVKKATVEAGAKINHLAYVGDARVGAGANVGAGTITCNYDGFNKSFTDIGAGAFIGSNTSLVAPVKVGDGAVVGAGSVITKEVTPGALAVARGSQMELKGWAERFRAQQAAKKAKKD</sequence>
<protein>
    <recommendedName>
        <fullName evidence="1">Bifunctional protein GlmU</fullName>
    </recommendedName>
    <domain>
        <recommendedName>
            <fullName evidence="1">UDP-N-acetylglucosamine pyrophosphorylase</fullName>
            <ecNumber evidence="1">2.7.7.23</ecNumber>
        </recommendedName>
        <alternativeName>
            <fullName evidence="1">N-acetylglucosamine-1-phosphate uridyltransferase</fullName>
        </alternativeName>
    </domain>
    <domain>
        <recommendedName>
            <fullName evidence="1">Glucosamine-1-phosphate N-acetyltransferase</fullName>
            <ecNumber evidence="1">2.3.1.157</ecNumber>
        </recommendedName>
    </domain>
</protein>
<dbReference type="EC" id="2.7.7.23" evidence="1"/>
<dbReference type="EC" id="2.3.1.157" evidence="1"/>
<dbReference type="EMBL" id="AP007255">
    <property type="protein sequence ID" value="BAE50084.1"/>
    <property type="status" value="ALT_INIT"/>
    <property type="molecule type" value="Genomic_DNA"/>
</dbReference>
<dbReference type="RefSeq" id="WP_043743620.1">
    <property type="nucleotide sequence ID" value="NC_007626.1"/>
</dbReference>
<dbReference type="SMR" id="Q2W7U1"/>
<dbReference type="STRING" id="342108.amb1280"/>
<dbReference type="KEGG" id="mag:amb1280"/>
<dbReference type="HOGENOM" id="CLU_029499_15_2_5"/>
<dbReference type="OrthoDB" id="9775031at2"/>
<dbReference type="UniPathway" id="UPA00113">
    <property type="reaction ID" value="UER00532"/>
</dbReference>
<dbReference type="UniPathway" id="UPA00113">
    <property type="reaction ID" value="UER00533"/>
</dbReference>
<dbReference type="UniPathway" id="UPA00973"/>
<dbReference type="Proteomes" id="UP000007058">
    <property type="component" value="Chromosome"/>
</dbReference>
<dbReference type="GO" id="GO:0005737">
    <property type="term" value="C:cytoplasm"/>
    <property type="evidence" value="ECO:0007669"/>
    <property type="project" value="UniProtKB-SubCell"/>
</dbReference>
<dbReference type="GO" id="GO:0016020">
    <property type="term" value="C:membrane"/>
    <property type="evidence" value="ECO:0007669"/>
    <property type="project" value="GOC"/>
</dbReference>
<dbReference type="GO" id="GO:0019134">
    <property type="term" value="F:glucosamine-1-phosphate N-acetyltransferase activity"/>
    <property type="evidence" value="ECO:0007669"/>
    <property type="project" value="UniProtKB-UniRule"/>
</dbReference>
<dbReference type="GO" id="GO:0000287">
    <property type="term" value="F:magnesium ion binding"/>
    <property type="evidence" value="ECO:0007669"/>
    <property type="project" value="UniProtKB-UniRule"/>
</dbReference>
<dbReference type="GO" id="GO:0003977">
    <property type="term" value="F:UDP-N-acetylglucosamine diphosphorylase activity"/>
    <property type="evidence" value="ECO:0007669"/>
    <property type="project" value="UniProtKB-UniRule"/>
</dbReference>
<dbReference type="GO" id="GO:0000902">
    <property type="term" value="P:cell morphogenesis"/>
    <property type="evidence" value="ECO:0007669"/>
    <property type="project" value="UniProtKB-UniRule"/>
</dbReference>
<dbReference type="GO" id="GO:0071555">
    <property type="term" value="P:cell wall organization"/>
    <property type="evidence" value="ECO:0007669"/>
    <property type="project" value="UniProtKB-KW"/>
</dbReference>
<dbReference type="GO" id="GO:0009245">
    <property type="term" value="P:lipid A biosynthetic process"/>
    <property type="evidence" value="ECO:0007669"/>
    <property type="project" value="UniProtKB-UniRule"/>
</dbReference>
<dbReference type="GO" id="GO:0009252">
    <property type="term" value="P:peptidoglycan biosynthetic process"/>
    <property type="evidence" value="ECO:0007669"/>
    <property type="project" value="UniProtKB-UniRule"/>
</dbReference>
<dbReference type="GO" id="GO:0008360">
    <property type="term" value="P:regulation of cell shape"/>
    <property type="evidence" value="ECO:0007669"/>
    <property type="project" value="UniProtKB-KW"/>
</dbReference>
<dbReference type="GO" id="GO:0006048">
    <property type="term" value="P:UDP-N-acetylglucosamine biosynthetic process"/>
    <property type="evidence" value="ECO:0007669"/>
    <property type="project" value="UniProtKB-UniPathway"/>
</dbReference>
<dbReference type="CDD" id="cd02540">
    <property type="entry name" value="GT2_GlmU_N_bac"/>
    <property type="match status" value="1"/>
</dbReference>
<dbReference type="CDD" id="cd03353">
    <property type="entry name" value="LbH_GlmU_C"/>
    <property type="match status" value="1"/>
</dbReference>
<dbReference type="Gene3D" id="2.160.10.10">
    <property type="entry name" value="Hexapeptide repeat proteins"/>
    <property type="match status" value="1"/>
</dbReference>
<dbReference type="Gene3D" id="3.90.550.10">
    <property type="entry name" value="Spore Coat Polysaccharide Biosynthesis Protein SpsA, Chain A"/>
    <property type="match status" value="1"/>
</dbReference>
<dbReference type="HAMAP" id="MF_01631">
    <property type="entry name" value="GlmU"/>
    <property type="match status" value="1"/>
</dbReference>
<dbReference type="InterPro" id="IPR005882">
    <property type="entry name" value="Bifunctional_GlmU"/>
</dbReference>
<dbReference type="InterPro" id="IPR050065">
    <property type="entry name" value="GlmU-like"/>
</dbReference>
<dbReference type="InterPro" id="IPR038009">
    <property type="entry name" value="GlmU_C_LbH"/>
</dbReference>
<dbReference type="InterPro" id="IPR001451">
    <property type="entry name" value="Hexapep"/>
</dbReference>
<dbReference type="InterPro" id="IPR018357">
    <property type="entry name" value="Hexapep_transf_CS"/>
</dbReference>
<dbReference type="InterPro" id="IPR025877">
    <property type="entry name" value="MobA-like_NTP_Trfase"/>
</dbReference>
<dbReference type="InterPro" id="IPR029044">
    <property type="entry name" value="Nucleotide-diphossugar_trans"/>
</dbReference>
<dbReference type="InterPro" id="IPR011004">
    <property type="entry name" value="Trimer_LpxA-like_sf"/>
</dbReference>
<dbReference type="NCBIfam" id="TIGR01173">
    <property type="entry name" value="glmU"/>
    <property type="match status" value="1"/>
</dbReference>
<dbReference type="NCBIfam" id="NF010933">
    <property type="entry name" value="PRK14353.1"/>
    <property type="match status" value="1"/>
</dbReference>
<dbReference type="PANTHER" id="PTHR43584:SF3">
    <property type="entry name" value="BIFUNCTIONAL PROTEIN GLMU"/>
    <property type="match status" value="1"/>
</dbReference>
<dbReference type="PANTHER" id="PTHR43584">
    <property type="entry name" value="NUCLEOTIDYL TRANSFERASE"/>
    <property type="match status" value="1"/>
</dbReference>
<dbReference type="Pfam" id="PF00132">
    <property type="entry name" value="Hexapep"/>
    <property type="match status" value="2"/>
</dbReference>
<dbReference type="Pfam" id="PF12804">
    <property type="entry name" value="NTP_transf_3"/>
    <property type="match status" value="1"/>
</dbReference>
<dbReference type="SUPFAM" id="SSF53448">
    <property type="entry name" value="Nucleotide-diphospho-sugar transferases"/>
    <property type="match status" value="1"/>
</dbReference>
<dbReference type="SUPFAM" id="SSF51161">
    <property type="entry name" value="Trimeric LpxA-like enzymes"/>
    <property type="match status" value="1"/>
</dbReference>
<dbReference type="PROSITE" id="PS00101">
    <property type="entry name" value="HEXAPEP_TRANSFERASES"/>
    <property type="match status" value="1"/>
</dbReference>
<name>GLMU_PARM1</name>
<comment type="function">
    <text evidence="1">Catalyzes the last two sequential reactions in the de novo biosynthetic pathway for UDP-N-acetylglucosamine (UDP-GlcNAc). The C-terminal domain catalyzes the transfer of acetyl group from acetyl coenzyme A to glucosamine-1-phosphate (GlcN-1-P) to produce N-acetylglucosamine-1-phosphate (GlcNAc-1-P), which is converted into UDP-GlcNAc by the transfer of uridine 5-monophosphate (from uridine 5-triphosphate), a reaction catalyzed by the N-terminal domain.</text>
</comment>
<comment type="catalytic activity">
    <reaction evidence="1">
        <text>alpha-D-glucosamine 1-phosphate + acetyl-CoA = N-acetyl-alpha-D-glucosamine 1-phosphate + CoA + H(+)</text>
        <dbReference type="Rhea" id="RHEA:13725"/>
        <dbReference type="ChEBI" id="CHEBI:15378"/>
        <dbReference type="ChEBI" id="CHEBI:57287"/>
        <dbReference type="ChEBI" id="CHEBI:57288"/>
        <dbReference type="ChEBI" id="CHEBI:57776"/>
        <dbReference type="ChEBI" id="CHEBI:58516"/>
        <dbReference type="EC" id="2.3.1.157"/>
    </reaction>
</comment>
<comment type="catalytic activity">
    <reaction evidence="1">
        <text>N-acetyl-alpha-D-glucosamine 1-phosphate + UTP + H(+) = UDP-N-acetyl-alpha-D-glucosamine + diphosphate</text>
        <dbReference type="Rhea" id="RHEA:13509"/>
        <dbReference type="ChEBI" id="CHEBI:15378"/>
        <dbReference type="ChEBI" id="CHEBI:33019"/>
        <dbReference type="ChEBI" id="CHEBI:46398"/>
        <dbReference type="ChEBI" id="CHEBI:57705"/>
        <dbReference type="ChEBI" id="CHEBI:57776"/>
        <dbReference type="EC" id="2.7.7.23"/>
    </reaction>
</comment>
<comment type="cofactor">
    <cofactor evidence="1">
        <name>Mg(2+)</name>
        <dbReference type="ChEBI" id="CHEBI:18420"/>
    </cofactor>
    <text evidence="1">Binds 1 Mg(2+) ion per subunit.</text>
</comment>
<comment type="pathway">
    <text evidence="1">Nucleotide-sugar biosynthesis; UDP-N-acetyl-alpha-D-glucosamine biosynthesis; N-acetyl-alpha-D-glucosamine 1-phosphate from alpha-D-glucosamine 6-phosphate (route II): step 2/2.</text>
</comment>
<comment type="pathway">
    <text evidence="1">Nucleotide-sugar biosynthesis; UDP-N-acetyl-alpha-D-glucosamine biosynthesis; UDP-N-acetyl-alpha-D-glucosamine from N-acetyl-alpha-D-glucosamine 1-phosphate: step 1/1.</text>
</comment>
<comment type="pathway">
    <text evidence="1">Bacterial outer membrane biogenesis; LPS lipid A biosynthesis.</text>
</comment>
<comment type="subunit">
    <text evidence="1">Homotrimer.</text>
</comment>
<comment type="subcellular location">
    <subcellularLocation>
        <location evidence="1">Cytoplasm</location>
    </subcellularLocation>
</comment>
<comment type="similarity">
    <text evidence="1">In the N-terminal section; belongs to the N-acetylglucosamine-1-phosphate uridyltransferase family.</text>
</comment>
<comment type="similarity">
    <text evidence="1">In the C-terminal section; belongs to the transferase hexapeptide repeat family.</text>
</comment>
<comment type="sequence caution" evidence="2">
    <conflict type="erroneous initiation">
        <sequence resource="EMBL-CDS" id="BAE50084"/>
    </conflict>
</comment>
<feature type="chain" id="PRO_0000244297" description="Bifunctional protein GlmU">
    <location>
        <begin position="1"/>
        <end position="449"/>
    </location>
</feature>
<feature type="region of interest" description="Pyrophosphorylase" evidence="1">
    <location>
        <begin position="1"/>
        <end position="230"/>
    </location>
</feature>
<feature type="region of interest" description="Linker" evidence="1">
    <location>
        <begin position="231"/>
        <end position="251"/>
    </location>
</feature>
<feature type="region of interest" description="N-acetyltransferase" evidence="1">
    <location>
        <begin position="252"/>
        <end position="449"/>
    </location>
</feature>
<feature type="active site" description="Proton acceptor" evidence="1">
    <location>
        <position position="347"/>
    </location>
</feature>
<feature type="binding site" evidence="1">
    <location>
        <begin position="11"/>
        <end position="14"/>
    </location>
    <ligand>
        <name>UDP-N-acetyl-alpha-D-glucosamine</name>
        <dbReference type="ChEBI" id="CHEBI:57705"/>
    </ligand>
</feature>
<feature type="binding site" evidence="1">
    <location>
        <position position="25"/>
    </location>
    <ligand>
        <name>UDP-N-acetyl-alpha-D-glucosamine</name>
        <dbReference type="ChEBI" id="CHEBI:57705"/>
    </ligand>
</feature>
<feature type="binding site" evidence="1">
    <location>
        <position position="74"/>
    </location>
    <ligand>
        <name>UDP-N-acetyl-alpha-D-glucosamine</name>
        <dbReference type="ChEBI" id="CHEBI:57705"/>
    </ligand>
</feature>
<feature type="binding site" evidence="1">
    <location>
        <begin position="79"/>
        <end position="80"/>
    </location>
    <ligand>
        <name>UDP-N-acetyl-alpha-D-glucosamine</name>
        <dbReference type="ChEBI" id="CHEBI:57705"/>
    </ligand>
</feature>
<feature type="binding site" evidence="1">
    <location>
        <begin position="102"/>
        <end position="104"/>
    </location>
    <ligand>
        <name>UDP-N-acetyl-alpha-D-glucosamine</name>
        <dbReference type="ChEBI" id="CHEBI:57705"/>
    </ligand>
</feature>
<feature type="binding site" evidence="1">
    <location>
        <position position="104"/>
    </location>
    <ligand>
        <name>Mg(2+)</name>
        <dbReference type="ChEBI" id="CHEBI:18420"/>
    </ligand>
</feature>
<feature type="binding site" evidence="1">
    <location>
        <position position="142"/>
    </location>
    <ligand>
        <name>UDP-N-acetyl-alpha-D-glucosamine</name>
        <dbReference type="ChEBI" id="CHEBI:57705"/>
    </ligand>
</feature>
<feature type="binding site" evidence="1">
    <location>
        <position position="156"/>
    </location>
    <ligand>
        <name>UDP-N-acetyl-alpha-D-glucosamine</name>
        <dbReference type="ChEBI" id="CHEBI:57705"/>
    </ligand>
</feature>
<feature type="binding site" evidence="1">
    <location>
        <position position="171"/>
    </location>
    <ligand>
        <name>UDP-N-acetyl-alpha-D-glucosamine</name>
        <dbReference type="ChEBI" id="CHEBI:57705"/>
    </ligand>
</feature>
<feature type="binding site" evidence="1">
    <location>
        <position position="228"/>
    </location>
    <ligand>
        <name>Mg(2+)</name>
        <dbReference type="ChEBI" id="CHEBI:18420"/>
    </ligand>
</feature>
<feature type="binding site" evidence="1">
    <location>
        <position position="228"/>
    </location>
    <ligand>
        <name>UDP-N-acetyl-alpha-D-glucosamine</name>
        <dbReference type="ChEBI" id="CHEBI:57705"/>
    </ligand>
</feature>
<feature type="binding site" evidence="1">
    <location>
        <position position="317"/>
    </location>
    <ligand>
        <name>UDP-N-acetyl-alpha-D-glucosamine</name>
        <dbReference type="ChEBI" id="CHEBI:57705"/>
    </ligand>
</feature>
<feature type="binding site" evidence="1">
    <location>
        <position position="335"/>
    </location>
    <ligand>
        <name>UDP-N-acetyl-alpha-D-glucosamine</name>
        <dbReference type="ChEBI" id="CHEBI:57705"/>
    </ligand>
</feature>
<feature type="binding site" evidence="1">
    <location>
        <position position="350"/>
    </location>
    <ligand>
        <name>UDP-N-acetyl-alpha-D-glucosamine</name>
        <dbReference type="ChEBI" id="CHEBI:57705"/>
    </ligand>
</feature>
<feature type="binding site" evidence="1">
    <location>
        <position position="361"/>
    </location>
    <ligand>
        <name>UDP-N-acetyl-alpha-D-glucosamine</name>
        <dbReference type="ChEBI" id="CHEBI:57705"/>
    </ligand>
</feature>
<feature type="binding site" evidence="1">
    <location>
        <position position="364"/>
    </location>
    <ligand>
        <name>acetyl-CoA</name>
        <dbReference type="ChEBI" id="CHEBI:57288"/>
    </ligand>
</feature>
<feature type="binding site" evidence="1">
    <location>
        <begin position="370"/>
        <end position="371"/>
    </location>
    <ligand>
        <name>acetyl-CoA</name>
        <dbReference type="ChEBI" id="CHEBI:57288"/>
    </ligand>
</feature>
<feature type="binding site" evidence="1">
    <location>
        <position position="389"/>
    </location>
    <ligand>
        <name>acetyl-CoA</name>
        <dbReference type="ChEBI" id="CHEBI:57288"/>
    </ligand>
</feature>
<feature type="binding site" evidence="1">
    <location>
        <position position="407"/>
    </location>
    <ligand>
        <name>acetyl-CoA</name>
        <dbReference type="ChEBI" id="CHEBI:57288"/>
    </ligand>
</feature>
<feature type="binding site" evidence="1">
    <location>
        <position position="424"/>
    </location>
    <ligand>
        <name>acetyl-CoA</name>
        <dbReference type="ChEBI" id="CHEBI:57288"/>
    </ligand>
</feature>
<accession>Q2W7U1</accession>
<evidence type="ECO:0000255" key="1">
    <source>
        <dbReference type="HAMAP-Rule" id="MF_01631"/>
    </source>
</evidence>
<evidence type="ECO:0000305" key="2"/>
<keyword id="KW-0012">Acyltransferase</keyword>
<keyword id="KW-0133">Cell shape</keyword>
<keyword id="KW-0961">Cell wall biogenesis/degradation</keyword>
<keyword id="KW-0963">Cytoplasm</keyword>
<keyword id="KW-0460">Magnesium</keyword>
<keyword id="KW-0479">Metal-binding</keyword>
<keyword id="KW-0511">Multifunctional enzyme</keyword>
<keyword id="KW-0548">Nucleotidyltransferase</keyword>
<keyword id="KW-0573">Peptidoglycan synthesis</keyword>
<keyword id="KW-0677">Repeat</keyword>
<keyword id="KW-0808">Transferase</keyword>